<keyword id="KW-0328">Glycosyltransferase</keyword>
<keyword id="KW-0441">Lipid A biosynthesis</keyword>
<keyword id="KW-0444">Lipid biosynthesis</keyword>
<keyword id="KW-0443">Lipid metabolism</keyword>
<keyword id="KW-0808">Transferase</keyword>
<sequence length="141" mass="15814">MTLSGQSSIKQRPLVIGLVAGETSGDILGAGLIRALKQMHPNIRFVGVAGPLMQAEGCEAWYEMEELAVMGIVEVLERLPRLLKIRKDLTQRFTQLKPDVFVGIDAPDFNITLEGRLKQKGLKTIHYVSPSVWAWRQKRVF</sequence>
<organism>
    <name type="scientific">Proteus mirabilis</name>
    <dbReference type="NCBI Taxonomy" id="584"/>
    <lineage>
        <taxon>Bacteria</taxon>
        <taxon>Pseudomonadati</taxon>
        <taxon>Pseudomonadota</taxon>
        <taxon>Gammaproteobacteria</taxon>
        <taxon>Enterobacterales</taxon>
        <taxon>Morganellaceae</taxon>
        <taxon>Proteus</taxon>
    </lineage>
</organism>
<gene>
    <name type="primary">lpxB</name>
</gene>
<name>LPXB_PROMI</name>
<accession>P72216</accession>
<proteinExistence type="inferred from homology"/>
<evidence type="ECO:0000250" key="1"/>
<evidence type="ECO:0000305" key="2"/>
<protein>
    <recommendedName>
        <fullName>Lipid-A-disaccharide synthase</fullName>
        <ecNumber>2.4.1.182</ecNumber>
    </recommendedName>
</protein>
<feature type="chain" id="PRO_0000190175" description="Lipid-A-disaccharide synthase">
    <location>
        <begin position="1"/>
        <end position="141" status="greater than"/>
    </location>
</feature>
<feature type="non-terminal residue">
    <location>
        <position position="141"/>
    </location>
</feature>
<reference key="1">
    <citation type="submission" date="1996-11" db="EMBL/GenBank/DDBJ databases">
        <authorList>
            <person name="Servos S."/>
            <person name="Khan S.A."/>
            <person name="Papakonstantinopoulou A."/>
            <person name="Dougan G."/>
            <person name="Maskell D."/>
        </authorList>
    </citation>
    <scope>NUCLEOTIDE SEQUENCE [GENOMIC DNA]</scope>
    <source>
        <strain>PR 990</strain>
    </source>
</reference>
<comment type="function">
    <text evidence="1">Condensation of UDP-2,3-diacylglucosamine and 2,3-diacylglucosamine-1-phosphate to form lipid A disaccharide, a precursor of lipid A, a phosphorylated glycolipid that anchors the lipopolysaccharide to the outer membrane of the cell.</text>
</comment>
<comment type="catalytic activity">
    <reaction>
        <text>2-N,3-O-bis[(3R)-3-hydroxytetradecanoyl]-alpha-D-glucosaminyl 1-phosphate + UDP-2-N,3-O-bis[(3R)-3-hydroxytetradecanoyl]-alpha-D-glucosamine = lipid A disaccharide (E. coli) + UDP + H(+)</text>
        <dbReference type="Rhea" id="RHEA:22668"/>
        <dbReference type="ChEBI" id="CHEBI:15378"/>
        <dbReference type="ChEBI" id="CHEBI:57957"/>
        <dbReference type="ChEBI" id="CHEBI:58223"/>
        <dbReference type="ChEBI" id="CHEBI:58466"/>
        <dbReference type="ChEBI" id="CHEBI:78847"/>
    </reaction>
</comment>
<comment type="catalytic activity">
    <reaction>
        <text>a lipid X + a UDP-2-N,3-O-bis[(3R)-3-hydroxyacyl]-alpha-D-glucosamine = a lipid A disaccharide + UDP + H(+)</text>
        <dbReference type="Rhea" id="RHEA:67828"/>
        <dbReference type="ChEBI" id="CHEBI:15378"/>
        <dbReference type="ChEBI" id="CHEBI:58223"/>
        <dbReference type="ChEBI" id="CHEBI:137748"/>
        <dbReference type="ChEBI" id="CHEBI:176338"/>
        <dbReference type="ChEBI" id="CHEBI:176343"/>
        <dbReference type="EC" id="2.4.1.182"/>
    </reaction>
</comment>
<comment type="pathway">
    <text>Glycolipid biosynthesis; lipid IV(A) biosynthesis; lipid IV(A) from (3R)-3-hydroxytetradecanoyl-[acyl-carrier-protein] and UDP-N-acetyl-alpha-D-glucosamine: step 5/6.</text>
</comment>
<comment type="similarity">
    <text evidence="2">Belongs to the LpxB family.</text>
</comment>
<dbReference type="EC" id="2.4.1.182"/>
<dbReference type="EMBL" id="Y09263">
    <property type="protein sequence ID" value="CAA70457.1"/>
    <property type="molecule type" value="Genomic_DNA"/>
</dbReference>
<dbReference type="SMR" id="P72216"/>
<dbReference type="STRING" id="584.AOUC001_03425"/>
<dbReference type="CAZy" id="GT19">
    <property type="family name" value="Glycosyltransferase Family 19"/>
</dbReference>
<dbReference type="UniPathway" id="UPA00359">
    <property type="reaction ID" value="UER00481"/>
</dbReference>
<dbReference type="GO" id="GO:0016020">
    <property type="term" value="C:membrane"/>
    <property type="evidence" value="ECO:0007669"/>
    <property type="project" value="GOC"/>
</dbReference>
<dbReference type="GO" id="GO:0008915">
    <property type="term" value="F:lipid-A-disaccharide synthase activity"/>
    <property type="evidence" value="ECO:0007669"/>
    <property type="project" value="UniProtKB-EC"/>
</dbReference>
<dbReference type="GO" id="GO:0005543">
    <property type="term" value="F:phospholipid binding"/>
    <property type="evidence" value="ECO:0007669"/>
    <property type="project" value="TreeGrafter"/>
</dbReference>
<dbReference type="GO" id="GO:0009245">
    <property type="term" value="P:lipid A biosynthetic process"/>
    <property type="evidence" value="ECO:0007669"/>
    <property type="project" value="UniProtKB-KW"/>
</dbReference>
<dbReference type="InterPro" id="IPR003835">
    <property type="entry name" value="Glyco_trans_19"/>
</dbReference>
<dbReference type="NCBIfam" id="TIGR00215">
    <property type="entry name" value="lpxB"/>
    <property type="match status" value="1"/>
</dbReference>
<dbReference type="PANTHER" id="PTHR30372">
    <property type="entry name" value="LIPID-A-DISACCHARIDE SYNTHASE"/>
    <property type="match status" value="1"/>
</dbReference>
<dbReference type="PANTHER" id="PTHR30372:SF4">
    <property type="entry name" value="LIPID-A-DISACCHARIDE SYNTHASE, MITOCHONDRIAL-RELATED"/>
    <property type="match status" value="1"/>
</dbReference>
<dbReference type="Pfam" id="PF02684">
    <property type="entry name" value="LpxB"/>
    <property type="match status" value="1"/>
</dbReference>
<dbReference type="SUPFAM" id="SSF53756">
    <property type="entry name" value="UDP-Glycosyltransferase/glycogen phosphorylase"/>
    <property type="match status" value="1"/>
</dbReference>